<evidence type="ECO:0000255" key="1">
    <source>
        <dbReference type="HAMAP-Rule" id="MF_01341"/>
    </source>
</evidence>
<evidence type="ECO:0000256" key="2">
    <source>
        <dbReference type="SAM" id="MobiDB-lite"/>
    </source>
</evidence>
<evidence type="ECO:0000305" key="3"/>
<dbReference type="EMBL" id="CU928158">
    <property type="protein sequence ID" value="CAQ90764.1"/>
    <property type="molecule type" value="Genomic_DNA"/>
</dbReference>
<dbReference type="RefSeq" id="WP_001238917.1">
    <property type="nucleotide sequence ID" value="NC_011740.1"/>
</dbReference>
<dbReference type="SMR" id="B7LRR7"/>
<dbReference type="GeneID" id="93778686"/>
<dbReference type="KEGG" id="efe:EFER_3284"/>
<dbReference type="HOGENOM" id="CLU_055188_4_2_6"/>
<dbReference type="OrthoDB" id="9810293at2"/>
<dbReference type="Proteomes" id="UP000000745">
    <property type="component" value="Chromosome"/>
</dbReference>
<dbReference type="GO" id="GO:0022625">
    <property type="term" value="C:cytosolic large ribosomal subunit"/>
    <property type="evidence" value="ECO:0007669"/>
    <property type="project" value="TreeGrafter"/>
</dbReference>
<dbReference type="GO" id="GO:0019843">
    <property type="term" value="F:rRNA binding"/>
    <property type="evidence" value="ECO:0007669"/>
    <property type="project" value="UniProtKB-UniRule"/>
</dbReference>
<dbReference type="GO" id="GO:0003735">
    <property type="term" value="F:structural constituent of ribosome"/>
    <property type="evidence" value="ECO:0007669"/>
    <property type="project" value="InterPro"/>
</dbReference>
<dbReference type="GO" id="GO:0006412">
    <property type="term" value="P:translation"/>
    <property type="evidence" value="ECO:0007669"/>
    <property type="project" value="UniProtKB-UniRule"/>
</dbReference>
<dbReference type="FunFam" id="3.100.10.10:FF:000003">
    <property type="entry name" value="50S ribosomal protein L15"/>
    <property type="match status" value="1"/>
</dbReference>
<dbReference type="Gene3D" id="3.100.10.10">
    <property type="match status" value="1"/>
</dbReference>
<dbReference type="HAMAP" id="MF_01341">
    <property type="entry name" value="Ribosomal_uL15"/>
    <property type="match status" value="1"/>
</dbReference>
<dbReference type="InterPro" id="IPR030878">
    <property type="entry name" value="Ribosomal_uL15"/>
</dbReference>
<dbReference type="InterPro" id="IPR021131">
    <property type="entry name" value="Ribosomal_uL15/eL18"/>
</dbReference>
<dbReference type="InterPro" id="IPR036227">
    <property type="entry name" value="Ribosomal_uL15/eL18_sf"/>
</dbReference>
<dbReference type="InterPro" id="IPR005749">
    <property type="entry name" value="Ribosomal_uL15_bac-type"/>
</dbReference>
<dbReference type="InterPro" id="IPR001196">
    <property type="entry name" value="Ribosomal_uL15_CS"/>
</dbReference>
<dbReference type="NCBIfam" id="TIGR01071">
    <property type="entry name" value="rplO_bact"/>
    <property type="match status" value="1"/>
</dbReference>
<dbReference type="PANTHER" id="PTHR12934">
    <property type="entry name" value="50S RIBOSOMAL PROTEIN L15"/>
    <property type="match status" value="1"/>
</dbReference>
<dbReference type="PANTHER" id="PTHR12934:SF11">
    <property type="entry name" value="LARGE RIBOSOMAL SUBUNIT PROTEIN UL15M"/>
    <property type="match status" value="1"/>
</dbReference>
<dbReference type="Pfam" id="PF00828">
    <property type="entry name" value="Ribosomal_L27A"/>
    <property type="match status" value="1"/>
</dbReference>
<dbReference type="SUPFAM" id="SSF52080">
    <property type="entry name" value="Ribosomal proteins L15p and L18e"/>
    <property type="match status" value="1"/>
</dbReference>
<dbReference type="PROSITE" id="PS00475">
    <property type="entry name" value="RIBOSOMAL_L15"/>
    <property type="match status" value="1"/>
</dbReference>
<organism>
    <name type="scientific">Escherichia fergusonii (strain ATCC 35469 / DSM 13698 / CCUG 18766 / IAM 14443 / JCM 21226 / LMG 7866 / NBRC 102419 / NCTC 12128 / CDC 0568-73)</name>
    <dbReference type="NCBI Taxonomy" id="585054"/>
    <lineage>
        <taxon>Bacteria</taxon>
        <taxon>Pseudomonadati</taxon>
        <taxon>Pseudomonadota</taxon>
        <taxon>Gammaproteobacteria</taxon>
        <taxon>Enterobacterales</taxon>
        <taxon>Enterobacteriaceae</taxon>
        <taxon>Escherichia</taxon>
    </lineage>
</organism>
<feature type="chain" id="PRO_1000142819" description="Large ribosomal subunit protein uL15">
    <location>
        <begin position="1"/>
        <end position="144"/>
    </location>
</feature>
<feature type="region of interest" description="Disordered" evidence="2">
    <location>
        <begin position="1"/>
        <end position="54"/>
    </location>
</feature>
<feature type="compositionally biased region" description="Gly residues" evidence="2">
    <location>
        <begin position="21"/>
        <end position="31"/>
    </location>
</feature>
<gene>
    <name evidence="1" type="primary">rplO</name>
    <name type="ordered locus">EFER_3284</name>
</gene>
<reference key="1">
    <citation type="journal article" date="2009" name="PLoS Genet.">
        <title>Organised genome dynamics in the Escherichia coli species results in highly diverse adaptive paths.</title>
        <authorList>
            <person name="Touchon M."/>
            <person name="Hoede C."/>
            <person name="Tenaillon O."/>
            <person name="Barbe V."/>
            <person name="Baeriswyl S."/>
            <person name="Bidet P."/>
            <person name="Bingen E."/>
            <person name="Bonacorsi S."/>
            <person name="Bouchier C."/>
            <person name="Bouvet O."/>
            <person name="Calteau A."/>
            <person name="Chiapello H."/>
            <person name="Clermont O."/>
            <person name="Cruveiller S."/>
            <person name="Danchin A."/>
            <person name="Diard M."/>
            <person name="Dossat C."/>
            <person name="Karoui M.E."/>
            <person name="Frapy E."/>
            <person name="Garry L."/>
            <person name="Ghigo J.M."/>
            <person name="Gilles A.M."/>
            <person name="Johnson J."/>
            <person name="Le Bouguenec C."/>
            <person name="Lescat M."/>
            <person name="Mangenot S."/>
            <person name="Martinez-Jehanne V."/>
            <person name="Matic I."/>
            <person name="Nassif X."/>
            <person name="Oztas S."/>
            <person name="Petit M.A."/>
            <person name="Pichon C."/>
            <person name="Rouy Z."/>
            <person name="Ruf C.S."/>
            <person name="Schneider D."/>
            <person name="Tourret J."/>
            <person name="Vacherie B."/>
            <person name="Vallenet D."/>
            <person name="Medigue C."/>
            <person name="Rocha E.P.C."/>
            <person name="Denamur E."/>
        </authorList>
    </citation>
    <scope>NUCLEOTIDE SEQUENCE [LARGE SCALE GENOMIC DNA]</scope>
    <source>
        <strain>ATCC 35469 / DSM 13698 / BCRC 15582 / CCUG 18766 / IAM 14443 / JCM 21226 / LMG 7866 / NBRC 102419 / NCTC 12128 / CDC 0568-73</strain>
    </source>
</reference>
<keyword id="KW-0687">Ribonucleoprotein</keyword>
<keyword id="KW-0689">Ribosomal protein</keyword>
<keyword id="KW-0694">RNA-binding</keyword>
<keyword id="KW-0699">rRNA-binding</keyword>
<name>RL15_ESCF3</name>
<sequence>MRLNTLSPAEGSKKAGKRLGRGIGSGLGKTGGRGHKGQKSRSGGGVRRGFEGGQMPLYRRLPKFGFTSRKAAITAEVRLSDLAKVEGGVVDLNTLKAANIIGIQIEFAKVILAGEVTTPVTVRGLRVTKGARAAIEAAGGKIEE</sequence>
<proteinExistence type="inferred from homology"/>
<accession>B7LRR7</accession>
<comment type="function">
    <text evidence="1">Binds to the 23S rRNA.</text>
</comment>
<comment type="subunit">
    <text evidence="1">Part of the 50S ribosomal subunit.</text>
</comment>
<comment type="similarity">
    <text evidence="1">Belongs to the universal ribosomal protein uL15 family.</text>
</comment>
<protein>
    <recommendedName>
        <fullName evidence="1">Large ribosomal subunit protein uL15</fullName>
    </recommendedName>
    <alternativeName>
        <fullName evidence="3">50S ribosomal protein L15</fullName>
    </alternativeName>
</protein>